<sequence>MFDQLDIVEERYEQLNELLSDPDVVNDSDKLRKYSKEQADLQKTVDVYRNYKAKKEELADIEEMLSETDDKEEVEMLKEESNGIKAELPNLEEELKILLIPKDPNDDKDVIVEIRAAAGGDEAAIFAGDLMRMYSKYAESQGFKTEIVEASESDHGGYKEISFSVSGNGAYSKLKFENGAHRVQRVPETESGGRIHTSTATVAVLPEVEDVEIEIRNEDLKIDTYRSSGAGGQHVNTTDSAVRITHLPTGVIATSSEKSQIQNREKAMKVLKARLYDMKVQEEQQKYASQRKSAVGTGDRSERIRTYNYPQSRVTDHRIGLTLQKLGQIMEGHLEEIIDALTLSEQTDKLKELNNGEL</sequence>
<feature type="chain" id="PRO_1000075519" description="Peptide chain release factor 1">
    <location>
        <begin position="1"/>
        <end position="358"/>
    </location>
</feature>
<feature type="modified residue" description="N5-methylglutamine" evidence="1">
    <location>
        <position position="233"/>
    </location>
</feature>
<comment type="function">
    <text evidence="1">Peptide chain release factor 1 directs the termination of translation in response to the peptide chain termination codons UAG and UAA.</text>
</comment>
<comment type="subcellular location">
    <subcellularLocation>
        <location evidence="1">Cytoplasm</location>
    </subcellularLocation>
</comment>
<comment type="PTM">
    <text evidence="1">Methylated by PrmC. Methylation increases the termination efficiency of RF1.</text>
</comment>
<comment type="similarity">
    <text evidence="1">Belongs to the prokaryotic/mitochondrial release factor family.</text>
</comment>
<dbReference type="EMBL" id="CP000703">
    <property type="protein sequence ID" value="ABQ49936.1"/>
    <property type="molecule type" value="Genomic_DNA"/>
</dbReference>
<dbReference type="RefSeq" id="WP_000460242.1">
    <property type="nucleotide sequence ID" value="NC_009487.1"/>
</dbReference>
<dbReference type="SMR" id="A5IUR3"/>
<dbReference type="KEGG" id="saj:SaurJH9_2154"/>
<dbReference type="HOGENOM" id="CLU_036856_0_1_9"/>
<dbReference type="GO" id="GO:0005737">
    <property type="term" value="C:cytoplasm"/>
    <property type="evidence" value="ECO:0007669"/>
    <property type="project" value="UniProtKB-SubCell"/>
</dbReference>
<dbReference type="GO" id="GO:0016149">
    <property type="term" value="F:translation release factor activity, codon specific"/>
    <property type="evidence" value="ECO:0007669"/>
    <property type="project" value="UniProtKB-UniRule"/>
</dbReference>
<dbReference type="FunFam" id="3.30.160.20:FF:000004">
    <property type="entry name" value="Peptide chain release factor 1"/>
    <property type="match status" value="1"/>
</dbReference>
<dbReference type="FunFam" id="3.30.70.1660:FF:000002">
    <property type="entry name" value="Peptide chain release factor 1"/>
    <property type="match status" value="1"/>
</dbReference>
<dbReference type="FunFam" id="3.30.70.1660:FF:000004">
    <property type="entry name" value="Peptide chain release factor 1"/>
    <property type="match status" value="1"/>
</dbReference>
<dbReference type="Gene3D" id="3.30.160.20">
    <property type="match status" value="1"/>
</dbReference>
<dbReference type="Gene3D" id="3.30.70.1660">
    <property type="match status" value="1"/>
</dbReference>
<dbReference type="Gene3D" id="6.10.140.1950">
    <property type="match status" value="1"/>
</dbReference>
<dbReference type="HAMAP" id="MF_00093">
    <property type="entry name" value="Rel_fac_1"/>
    <property type="match status" value="1"/>
</dbReference>
<dbReference type="InterPro" id="IPR005139">
    <property type="entry name" value="PCRF"/>
</dbReference>
<dbReference type="InterPro" id="IPR000352">
    <property type="entry name" value="Pep_chain_release_fac_I"/>
</dbReference>
<dbReference type="InterPro" id="IPR045853">
    <property type="entry name" value="Pep_chain_release_fac_I_sf"/>
</dbReference>
<dbReference type="InterPro" id="IPR050057">
    <property type="entry name" value="Prokaryotic/Mito_RF"/>
</dbReference>
<dbReference type="InterPro" id="IPR004373">
    <property type="entry name" value="RF-1"/>
</dbReference>
<dbReference type="NCBIfam" id="TIGR00019">
    <property type="entry name" value="prfA"/>
    <property type="match status" value="1"/>
</dbReference>
<dbReference type="NCBIfam" id="NF001859">
    <property type="entry name" value="PRK00591.1"/>
    <property type="match status" value="1"/>
</dbReference>
<dbReference type="PANTHER" id="PTHR43804">
    <property type="entry name" value="LD18447P"/>
    <property type="match status" value="1"/>
</dbReference>
<dbReference type="PANTHER" id="PTHR43804:SF7">
    <property type="entry name" value="LD18447P"/>
    <property type="match status" value="1"/>
</dbReference>
<dbReference type="Pfam" id="PF03462">
    <property type="entry name" value="PCRF"/>
    <property type="match status" value="1"/>
</dbReference>
<dbReference type="Pfam" id="PF00472">
    <property type="entry name" value="RF-1"/>
    <property type="match status" value="1"/>
</dbReference>
<dbReference type="SMART" id="SM00937">
    <property type="entry name" value="PCRF"/>
    <property type="match status" value="1"/>
</dbReference>
<dbReference type="SUPFAM" id="SSF75620">
    <property type="entry name" value="Release factor"/>
    <property type="match status" value="1"/>
</dbReference>
<dbReference type="PROSITE" id="PS00745">
    <property type="entry name" value="RF_PROK_I"/>
    <property type="match status" value="1"/>
</dbReference>
<organism>
    <name type="scientific">Staphylococcus aureus (strain JH9)</name>
    <dbReference type="NCBI Taxonomy" id="359786"/>
    <lineage>
        <taxon>Bacteria</taxon>
        <taxon>Bacillati</taxon>
        <taxon>Bacillota</taxon>
        <taxon>Bacilli</taxon>
        <taxon>Bacillales</taxon>
        <taxon>Staphylococcaceae</taxon>
        <taxon>Staphylococcus</taxon>
    </lineage>
</organism>
<name>RF1_STAA9</name>
<protein>
    <recommendedName>
        <fullName evidence="1">Peptide chain release factor 1</fullName>
        <shortName evidence="1">RF-1</shortName>
    </recommendedName>
</protein>
<proteinExistence type="inferred from homology"/>
<accession>A5IUR3</accession>
<keyword id="KW-0963">Cytoplasm</keyword>
<keyword id="KW-0488">Methylation</keyword>
<keyword id="KW-0648">Protein biosynthesis</keyword>
<evidence type="ECO:0000255" key="1">
    <source>
        <dbReference type="HAMAP-Rule" id="MF_00093"/>
    </source>
</evidence>
<reference key="1">
    <citation type="submission" date="2007-05" db="EMBL/GenBank/DDBJ databases">
        <title>Complete sequence of chromosome of Staphylococcus aureus subsp. aureus JH9.</title>
        <authorList>
            <consortium name="US DOE Joint Genome Institute"/>
            <person name="Copeland A."/>
            <person name="Lucas S."/>
            <person name="Lapidus A."/>
            <person name="Barry K."/>
            <person name="Detter J.C."/>
            <person name="Glavina del Rio T."/>
            <person name="Hammon N."/>
            <person name="Israni S."/>
            <person name="Pitluck S."/>
            <person name="Chain P."/>
            <person name="Malfatti S."/>
            <person name="Shin M."/>
            <person name="Vergez L."/>
            <person name="Schmutz J."/>
            <person name="Larimer F."/>
            <person name="Land M."/>
            <person name="Hauser L."/>
            <person name="Kyrpides N."/>
            <person name="Kim E."/>
            <person name="Tomasz A."/>
            <person name="Richardson P."/>
        </authorList>
    </citation>
    <scope>NUCLEOTIDE SEQUENCE [LARGE SCALE GENOMIC DNA]</scope>
    <source>
        <strain>JH9</strain>
    </source>
</reference>
<gene>
    <name evidence="1" type="primary">prfA</name>
    <name type="ordered locus">SaurJH9_2154</name>
</gene>